<sequence>MAHKKAGGSSRNGRDSAGRRLGVKKFGGERVVSGNIIVRQRGTKWHPGANVGIGVDHTLFALADGAVKFLTKDKGRSYVSVVIEQQTEAAE</sequence>
<reference key="1">
    <citation type="journal article" date="2010" name="J. Bacteriol.">
        <title>Complete genome sequence of the aerobic facultative methanotroph Methylocella silvestris BL2.</title>
        <authorList>
            <person name="Chen Y."/>
            <person name="Crombie A."/>
            <person name="Rahman M.T."/>
            <person name="Dedysh S.N."/>
            <person name="Liesack W."/>
            <person name="Stott M.B."/>
            <person name="Alam M."/>
            <person name="Theisen A.R."/>
            <person name="Murrell J.C."/>
            <person name="Dunfield P.F."/>
        </authorList>
    </citation>
    <scope>NUCLEOTIDE SEQUENCE [LARGE SCALE GENOMIC DNA]</scope>
    <source>
        <strain>DSM 15510 / CIP 108128 / LMG 27833 / NCIMB 13906 / BL2</strain>
    </source>
</reference>
<organism>
    <name type="scientific">Methylocella silvestris (strain DSM 15510 / CIP 108128 / LMG 27833 / NCIMB 13906 / BL2)</name>
    <dbReference type="NCBI Taxonomy" id="395965"/>
    <lineage>
        <taxon>Bacteria</taxon>
        <taxon>Pseudomonadati</taxon>
        <taxon>Pseudomonadota</taxon>
        <taxon>Alphaproteobacteria</taxon>
        <taxon>Hyphomicrobiales</taxon>
        <taxon>Beijerinckiaceae</taxon>
        <taxon>Methylocella</taxon>
    </lineage>
</organism>
<gene>
    <name evidence="1" type="primary">rpmA</name>
    <name type="ordered locus">Msil_3282</name>
</gene>
<feature type="chain" id="PRO_1000195876" description="Large ribosomal subunit protein bL27">
    <location>
        <begin position="1"/>
        <end position="91"/>
    </location>
</feature>
<feature type="region of interest" description="Disordered" evidence="2">
    <location>
        <begin position="1"/>
        <end position="22"/>
    </location>
</feature>
<dbReference type="EMBL" id="CP001280">
    <property type="protein sequence ID" value="ACK52189.1"/>
    <property type="molecule type" value="Genomic_DNA"/>
</dbReference>
<dbReference type="RefSeq" id="WP_012592258.1">
    <property type="nucleotide sequence ID" value="NC_011666.1"/>
</dbReference>
<dbReference type="SMR" id="B8EQH6"/>
<dbReference type="STRING" id="395965.Msil_3282"/>
<dbReference type="KEGG" id="msl:Msil_3282"/>
<dbReference type="eggNOG" id="COG0211">
    <property type="taxonomic scope" value="Bacteria"/>
</dbReference>
<dbReference type="HOGENOM" id="CLU_095424_4_1_5"/>
<dbReference type="OrthoDB" id="9803474at2"/>
<dbReference type="Proteomes" id="UP000002257">
    <property type="component" value="Chromosome"/>
</dbReference>
<dbReference type="GO" id="GO:0022625">
    <property type="term" value="C:cytosolic large ribosomal subunit"/>
    <property type="evidence" value="ECO:0007669"/>
    <property type="project" value="TreeGrafter"/>
</dbReference>
<dbReference type="GO" id="GO:0003735">
    <property type="term" value="F:structural constituent of ribosome"/>
    <property type="evidence" value="ECO:0007669"/>
    <property type="project" value="InterPro"/>
</dbReference>
<dbReference type="GO" id="GO:0006412">
    <property type="term" value="P:translation"/>
    <property type="evidence" value="ECO:0007669"/>
    <property type="project" value="UniProtKB-UniRule"/>
</dbReference>
<dbReference type="FunFam" id="2.40.50.100:FF:000020">
    <property type="entry name" value="50S ribosomal protein L27"/>
    <property type="match status" value="1"/>
</dbReference>
<dbReference type="Gene3D" id="2.40.50.100">
    <property type="match status" value="1"/>
</dbReference>
<dbReference type="HAMAP" id="MF_00539">
    <property type="entry name" value="Ribosomal_bL27"/>
    <property type="match status" value="1"/>
</dbReference>
<dbReference type="InterPro" id="IPR001684">
    <property type="entry name" value="Ribosomal_bL27"/>
</dbReference>
<dbReference type="InterPro" id="IPR018261">
    <property type="entry name" value="Ribosomal_bL27_CS"/>
</dbReference>
<dbReference type="NCBIfam" id="TIGR00062">
    <property type="entry name" value="L27"/>
    <property type="match status" value="1"/>
</dbReference>
<dbReference type="PANTHER" id="PTHR15893:SF0">
    <property type="entry name" value="LARGE RIBOSOMAL SUBUNIT PROTEIN BL27M"/>
    <property type="match status" value="1"/>
</dbReference>
<dbReference type="PANTHER" id="PTHR15893">
    <property type="entry name" value="RIBOSOMAL PROTEIN L27"/>
    <property type="match status" value="1"/>
</dbReference>
<dbReference type="Pfam" id="PF01016">
    <property type="entry name" value="Ribosomal_L27"/>
    <property type="match status" value="1"/>
</dbReference>
<dbReference type="PRINTS" id="PR00063">
    <property type="entry name" value="RIBOSOMALL27"/>
</dbReference>
<dbReference type="SUPFAM" id="SSF110324">
    <property type="entry name" value="Ribosomal L27 protein-like"/>
    <property type="match status" value="1"/>
</dbReference>
<dbReference type="PROSITE" id="PS00831">
    <property type="entry name" value="RIBOSOMAL_L27"/>
    <property type="match status" value="1"/>
</dbReference>
<keyword id="KW-1185">Reference proteome</keyword>
<keyword id="KW-0687">Ribonucleoprotein</keyword>
<keyword id="KW-0689">Ribosomal protein</keyword>
<comment type="similarity">
    <text evidence="1">Belongs to the bacterial ribosomal protein bL27 family.</text>
</comment>
<evidence type="ECO:0000255" key="1">
    <source>
        <dbReference type="HAMAP-Rule" id="MF_00539"/>
    </source>
</evidence>
<evidence type="ECO:0000256" key="2">
    <source>
        <dbReference type="SAM" id="MobiDB-lite"/>
    </source>
</evidence>
<evidence type="ECO:0000305" key="3"/>
<proteinExistence type="inferred from homology"/>
<accession>B8EQH6</accession>
<protein>
    <recommendedName>
        <fullName evidence="1">Large ribosomal subunit protein bL27</fullName>
    </recommendedName>
    <alternativeName>
        <fullName evidence="3">50S ribosomal protein L27</fullName>
    </alternativeName>
</protein>
<name>RL27_METSB</name>